<proteinExistence type="inferred from homology"/>
<reference key="1">
    <citation type="journal article" date="2009" name="BMC Genomics">
        <title>Analysis of the Rickettsia africae genome reveals that virulence acquisition in Rickettsia species may be explained by genome reduction.</title>
        <authorList>
            <person name="Fournier P.-E."/>
            <person name="El Karkouri K."/>
            <person name="Leroy Q."/>
            <person name="Robert C."/>
            <person name="Giumelli B."/>
            <person name="Renesto P."/>
            <person name="Socolovschi C."/>
            <person name="Parola P."/>
            <person name="Audic S."/>
            <person name="Raoult D."/>
        </authorList>
    </citation>
    <scope>NUCLEOTIDE SEQUENCE [LARGE SCALE GENOMIC DNA]</scope>
    <source>
        <strain>ESF-5</strain>
    </source>
</reference>
<dbReference type="EC" id="2.7.4.25" evidence="1"/>
<dbReference type="EMBL" id="CP001612">
    <property type="protein sequence ID" value="ACP53556.1"/>
    <property type="molecule type" value="Genomic_DNA"/>
</dbReference>
<dbReference type="RefSeq" id="WP_012719757.1">
    <property type="nucleotide sequence ID" value="NC_012633.1"/>
</dbReference>
<dbReference type="SMR" id="C3PNP6"/>
<dbReference type="KEGG" id="raf:RAF_ORF0662"/>
<dbReference type="HOGENOM" id="CLU_079959_0_2_5"/>
<dbReference type="Proteomes" id="UP000002305">
    <property type="component" value="Chromosome"/>
</dbReference>
<dbReference type="GO" id="GO:0005737">
    <property type="term" value="C:cytoplasm"/>
    <property type="evidence" value="ECO:0007669"/>
    <property type="project" value="UniProtKB-SubCell"/>
</dbReference>
<dbReference type="GO" id="GO:0005524">
    <property type="term" value="F:ATP binding"/>
    <property type="evidence" value="ECO:0007669"/>
    <property type="project" value="UniProtKB-UniRule"/>
</dbReference>
<dbReference type="GO" id="GO:0036430">
    <property type="term" value="F:CMP kinase activity"/>
    <property type="evidence" value="ECO:0007669"/>
    <property type="project" value="RHEA"/>
</dbReference>
<dbReference type="GO" id="GO:0036431">
    <property type="term" value="F:dCMP kinase activity"/>
    <property type="evidence" value="ECO:0007669"/>
    <property type="project" value="RHEA"/>
</dbReference>
<dbReference type="GO" id="GO:0006220">
    <property type="term" value="P:pyrimidine nucleotide metabolic process"/>
    <property type="evidence" value="ECO:0007669"/>
    <property type="project" value="UniProtKB-UniRule"/>
</dbReference>
<dbReference type="CDD" id="cd02020">
    <property type="entry name" value="CMPK"/>
    <property type="match status" value="1"/>
</dbReference>
<dbReference type="Gene3D" id="3.40.50.300">
    <property type="entry name" value="P-loop containing nucleotide triphosphate hydrolases"/>
    <property type="match status" value="1"/>
</dbReference>
<dbReference type="HAMAP" id="MF_00238">
    <property type="entry name" value="Cytidyl_kinase_type1"/>
    <property type="match status" value="1"/>
</dbReference>
<dbReference type="InterPro" id="IPR003136">
    <property type="entry name" value="Cytidylate_kin"/>
</dbReference>
<dbReference type="InterPro" id="IPR011994">
    <property type="entry name" value="Cytidylate_kinase_dom"/>
</dbReference>
<dbReference type="InterPro" id="IPR027417">
    <property type="entry name" value="P-loop_NTPase"/>
</dbReference>
<dbReference type="NCBIfam" id="TIGR00017">
    <property type="entry name" value="cmk"/>
    <property type="match status" value="1"/>
</dbReference>
<dbReference type="Pfam" id="PF02224">
    <property type="entry name" value="Cytidylate_kin"/>
    <property type="match status" value="1"/>
</dbReference>
<dbReference type="SUPFAM" id="SSF52540">
    <property type="entry name" value="P-loop containing nucleoside triphosphate hydrolases"/>
    <property type="match status" value="1"/>
</dbReference>
<keyword id="KW-0067">ATP-binding</keyword>
<keyword id="KW-0963">Cytoplasm</keyword>
<keyword id="KW-0418">Kinase</keyword>
<keyword id="KW-0547">Nucleotide-binding</keyword>
<keyword id="KW-0808">Transferase</keyword>
<evidence type="ECO:0000255" key="1">
    <source>
        <dbReference type="HAMAP-Rule" id="MF_00238"/>
    </source>
</evidence>
<name>KCY_RICAE</name>
<protein>
    <recommendedName>
        <fullName evidence="1">Cytidylate kinase</fullName>
        <shortName evidence="1">CK</shortName>
        <ecNumber evidence="1">2.7.4.25</ecNumber>
    </recommendedName>
    <alternativeName>
        <fullName evidence="1">Cytidine monophosphate kinase</fullName>
        <shortName evidence="1">CMP kinase</shortName>
    </alternativeName>
</protein>
<feature type="chain" id="PRO_1000204457" description="Cytidylate kinase">
    <location>
        <begin position="1"/>
        <end position="219"/>
    </location>
</feature>
<feature type="binding site" evidence="1">
    <location>
        <begin position="21"/>
        <end position="29"/>
    </location>
    <ligand>
        <name>ATP</name>
        <dbReference type="ChEBI" id="CHEBI:30616"/>
    </ligand>
</feature>
<comment type="catalytic activity">
    <reaction evidence="1">
        <text>CMP + ATP = CDP + ADP</text>
        <dbReference type="Rhea" id="RHEA:11600"/>
        <dbReference type="ChEBI" id="CHEBI:30616"/>
        <dbReference type="ChEBI" id="CHEBI:58069"/>
        <dbReference type="ChEBI" id="CHEBI:60377"/>
        <dbReference type="ChEBI" id="CHEBI:456216"/>
        <dbReference type="EC" id="2.7.4.25"/>
    </reaction>
</comment>
<comment type="catalytic activity">
    <reaction evidence="1">
        <text>dCMP + ATP = dCDP + ADP</text>
        <dbReference type="Rhea" id="RHEA:25094"/>
        <dbReference type="ChEBI" id="CHEBI:30616"/>
        <dbReference type="ChEBI" id="CHEBI:57566"/>
        <dbReference type="ChEBI" id="CHEBI:58593"/>
        <dbReference type="ChEBI" id="CHEBI:456216"/>
        <dbReference type="EC" id="2.7.4.25"/>
    </reaction>
</comment>
<comment type="subcellular location">
    <subcellularLocation>
        <location evidence="1">Cytoplasm</location>
    </subcellularLocation>
</comment>
<comment type="similarity">
    <text evidence="1">Belongs to the cytidylate kinase family. Type 1 subfamily.</text>
</comment>
<accession>C3PNP6</accession>
<sequence length="219" mass="24502">MVDLKTKAFDISQNFTISLDGPAASGKGTIGLILAKKFSLKYFQSSIVYRQLAFDCISQKIDVTDIDAVIALSKELKLDNNFDLENENIGNIASQIAVISEIRNNLNKYLINLVKTTPRMIMEGRDIGTVVAPDADLKIFITANPQIRAERRYKQLQAKGKTCILDEILRQIILRDKRDKERKAAPLLPASDALIIDTSKLSAMEVVEEVTNYIKNKIT</sequence>
<organism>
    <name type="scientific">Rickettsia africae (strain ESF-5)</name>
    <dbReference type="NCBI Taxonomy" id="347255"/>
    <lineage>
        <taxon>Bacteria</taxon>
        <taxon>Pseudomonadati</taxon>
        <taxon>Pseudomonadota</taxon>
        <taxon>Alphaproteobacteria</taxon>
        <taxon>Rickettsiales</taxon>
        <taxon>Rickettsiaceae</taxon>
        <taxon>Rickettsieae</taxon>
        <taxon>Rickettsia</taxon>
        <taxon>spotted fever group</taxon>
    </lineage>
</organism>
<gene>
    <name evidence="1" type="primary">cmk</name>
    <name type="ordered locus">RAF_ORF0662</name>
</gene>